<feature type="chain" id="PRO_0000284709" description="Ena/VASP-like protein">
    <location>
        <begin position="1"/>
        <end position="692"/>
    </location>
</feature>
<feature type="domain" description="WH1" evidence="4">
    <location>
        <begin position="1"/>
        <end position="112"/>
    </location>
</feature>
<feature type="region of interest" description="Disordered" evidence="5">
    <location>
        <begin position="116"/>
        <end position="310"/>
    </location>
</feature>
<feature type="region of interest" description="Disordered" evidence="5">
    <location>
        <begin position="466"/>
        <end position="518"/>
    </location>
</feature>
<feature type="region of interest" description="EVH2" evidence="3">
    <location>
        <begin position="522"/>
        <end position="689"/>
    </location>
</feature>
<feature type="region of interest" description="EVH2 block A" evidence="3">
    <location>
        <begin position="522"/>
        <end position="542"/>
    </location>
</feature>
<feature type="region of interest" description="Disordered" evidence="5">
    <location>
        <begin position="531"/>
        <end position="650"/>
    </location>
</feature>
<feature type="region of interest" description="EVH2 block B" evidence="3">
    <location>
        <begin position="563"/>
        <end position="580"/>
    </location>
</feature>
<feature type="region of interest" description="EVH2 block C" evidence="3">
    <location>
        <begin position="655"/>
        <end position="689"/>
    </location>
</feature>
<feature type="short sequence motif" description="KLKR" evidence="3">
    <location>
        <begin position="531"/>
        <end position="534"/>
    </location>
</feature>
<feature type="compositionally biased region" description="Polar residues" evidence="5">
    <location>
        <begin position="123"/>
        <end position="132"/>
    </location>
</feature>
<feature type="compositionally biased region" description="Polar residues" evidence="5">
    <location>
        <begin position="159"/>
        <end position="169"/>
    </location>
</feature>
<feature type="compositionally biased region" description="Low complexity" evidence="5">
    <location>
        <begin position="214"/>
        <end position="226"/>
    </location>
</feature>
<feature type="compositionally biased region" description="Polar residues" evidence="5">
    <location>
        <begin position="231"/>
        <end position="267"/>
    </location>
</feature>
<feature type="compositionally biased region" description="Low complexity" evidence="5">
    <location>
        <begin position="288"/>
        <end position="310"/>
    </location>
</feature>
<feature type="compositionally biased region" description="Low complexity" evidence="5">
    <location>
        <begin position="466"/>
        <end position="479"/>
    </location>
</feature>
<feature type="compositionally biased region" description="Pro residues" evidence="5">
    <location>
        <begin position="480"/>
        <end position="506"/>
    </location>
</feature>
<feature type="compositionally biased region" description="Polar residues" evidence="5">
    <location>
        <begin position="597"/>
        <end position="617"/>
    </location>
</feature>
<feature type="compositionally biased region" description="Basic and acidic residues" evidence="5">
    <location>
        <begin position="618"/>
        <end position="628"/>
    </location>
</feature>
<feature type="splice variant" id="VSP_052379" description="In isoform 1 and isoform 2." evidence="7">
    <original>V</original>
    <variation>G</variation>
    <location>
        <position position="162"/>
    </location>
</feature>
<feature type="splice variant" id="VSP_052380" description="In isoform 1 and isoform 2." evidence="7">
    <location>
        <begin position="163"/>
        <end position="456"/>
    </location>
</feature>
<feature type="splice variant" id="VSP_052381" description="In isoform 2." evidence="7">
    <original>R</original>
    <variation>RTPPVVKSPEAKSPIQSQPPSR</variation>
    <location>
        <position position="639"/>
    </location>
</feature>
<proteinExistence type="evidence at transcript level"/>
<accession>Q64GL0</accession>
<accession>Q64GL1</accession>
<accession>Q64GL2</accession>
<organism>
    <name type="scientific">Xenopus laevis</name>
    <name type="common">African clawed frog</name>
    <dbReference type="NCBI Taxonomy" id="8355"/>
    <lineage>
        <taxon>Eukaryota</taxon>
        <taxon>Metazoa</taxon>
        <taxon>Chordata</taxon>
        <taxon>Craniata</taxon>
        <taxon>Vertebrata</taxon>
        <taxon>Euteleostomi</taxon>
        <taxon>Amphibia</taxon>
        <taxon>Batrachia</taxon>
        <taxon>Anura</taxon>
        <taxon>Pipoidea</taxon>
        <taxon>Pipidae</taxon>
        <taxon>Xenopodinae</taxon>
        <taxon>Xenopus</taxon>
        <taxon>Xenopus</taxon>
    </lineage>
</organism>
<dbReference type="EMBL" id="AY686697">
    <property type="protein sequence ID" value="AAU20371.1"/>
    <property type="molecule type" value="mRNA"/>
</dbReference>
<dbReference type="EMBL" id="AY686698">
    <property type="protein sequence ID" value="AAU20372.1"/>
    <property type="molecule type" value="mRNA"/>
</dbReference>
<dbReference type="EMBL" id="AY686699">
    <property type="protein sequence ID" value="AAU20373.1"/>
    <property type="molecule type" value="mRNA"/>
</dbReference>
<dbReference type="RefSeq" id="NP_001089020.1">
    <molecule id="Q64GL0-1"/>
    <property type="nucleotide sequence ID" value="NM_001095551.1"/>
</dbReference>
<dbReference type="SMR" id="Q64GL0"/>
<dbReference type="KEGG" id="xla:496406"/>
<dbReference type="AGR" id="Xenbase:XB-GENE-988627"/>
<dbReference type="CTD" id="496406"/>
<dbReference type="Xenbase" id="XB-GENE-988627">
    <property type="gene designation" value="evl.L"/>
</dbReference>
<dbReference type="OrthoDB" id="31170at2759"/>
<dbReference type="Proteomes" id="UP000186698">
    <property type="component" value="Chromosome 8L"/>
</dbReference>
<dbReference type="Bgee" id="496406">
    <property type="expression patterns" value="Expressed in brain and 17 other cell types or tissues"/>
</dbReference>
<dbReference type="GO" id="GO:0005737">
    <property type="term" value="C:cytoplasm"/>
    <property type="evidence" value="ECO:0000250"/>
    <property type="project" value="UniProtKB"/>
</dbReference>
<dbReference type="GO" id="GO:0005925">
    <property type="term" value="C:focal adhesion"/>
    <property type="evidence" value="ECO:0000250"/>
    <property type="project" value="UniProtKB"/>
</dbReference>
<dbReference type="GO" id="GO:0030027">
    <property type="term" value="C:lamellipodium"/>
    <property type="evidence" value="ECO:0000250"/>
    <property type="project" value="UniProtKB"/>
</dbReference>
<dbReference type="GO" id="GO:0005886">
    <property type="term" value="C:plasma membrane"/>
    <property type="evidence" value="ECO:0000318"/>
    <property type="project" value="GO_Central"/>
</dbReference>
<dbReference type="GO" id="GO:0001725">
    <property type="term" value="C:stress fiber"/>
    <property type="evidence" value="ECO:0007669"/>
    <property type="project" value="UniProtKB-SubCell"/>
</dbReference>
<dbReference type="GO" id="GO:0003779">
    <property type="term" value="F:actin binding"/>
    <property type="evidence" value="ECO:0007669"/>
    <property type="project" value="UniProtKB-KW"/>
</dbReference>
<dbReference type="GO" id="GO:0005522">
    <property type="term" value="F:profilin binding"/>
    <property type="evidence" value="ECO:0000250"/>
    <property type="project" value="UniProtKB"/>
</dbReference>
<dbReference type="GO" id="GO:0017124">
    <property type="term" value="F:SH3 domain binding"/>
    <property type="evidence" value="ECO:0000250"/>
    <property type="project" value="UniProtKB"/>
</dbReference>
<dbReference type="GO" id="GO:0008154">
    <property type="term" value="P:actin polymerization or depolymerization"/>
    <property type="evidence" value="ECO:0000250"/>
    <property type="project" value="UniProtKB"/>
</dbReference>
<dbReference type="GO" id="GO:0007411">
    <property type="term" value="P:axon guidance"/>
    <property type="evidence" value="ECO:0000318"/>
    <property type="project" value="GO_Central"/>
</dbReference>
<dbReference type="GO" id="GO:0030838">
    <property type="term" value="P:positive regulation of actin filament polymerization"/>
    <property type="evidence" value="ECO:0000318"/>
    <property type="project" value="GO_Central"/>
</dbReference>
<dbReference type="CDD" id="cd01207">
    <property type="entry name" value="EVH1_Ena_VASP-like"/>
    <property type="match status" value="1"/>
</dbReference>
<dbReference type="FunFam" id="1.20.5.1160:FF:000004">
    <property type="entry name" value="Enah/Vasp-like, isoform CRA_a"/>
    <property type="match status" value="1"/>
</dbReference>
<dbReference type="FunFam" id="2.30.29.30:FF:000071">
    <property type="entry name" value="Enah/Vasp-like, isoform CRA_a"/>
    <property type="match status" value="1"/>
</dbReference>
<dbReference type="Gene3D" id="2.30.29.30">
    <property type="entry name" value="Pleckstrin-homology domain (PH domain)/Phosphotyrosine-binding domain (PTB)"/>
    <property type="match status" value="1"/>
</dbReference>
<dbReference type="Gene3D" id="1.20.5.1160">
    <property type="entry name" value="Vasodilator-stimulated phosphoprotein"/>
    <property type="match status" value="1"/>
</dbReference>
<dbReference type="InterPro" id="IPR011993">
    <property type="entry name" value="PH-like_dom_sf"/>
</dbReference>
<dbReference type="InterPro" id="IPR038023">
    <property type="entry name" value="VASP_sf"/>
</dbReference>
<dbReference type="InterPro" id="IPR014885">
    <property type="entry name" value="VASP_tetra"/>
</dbReference>
<dbReference type="InterPro" id="IPR000697">
    <property type="entry name" value="WH1/EVH1_dom"/>
</dbReference>
<dbReference type="PANTHER" id="PTHR11202:SF4">
    <property type="entry name" value="ENA_VASP-LIKE PROTEIN"/>
    <property type="match status" value="1"/>
</dbReference>
<dbReference type="PANTHER" id="PTHR11202">
    <property type="entry name" value="SPROUTY-RELATED, EVH1 DOMAIN-CONTAINING PROTEIN FAMILY MEMBER"/>
    <property type="match status" value="1"/>
</dbReference>
<dbReference type="Pfam" id="PF08776">
    <property type="entry name" value="VASP_tetra"/>
    <property type="match status" value="1"/>
</dbReference>
<dbReference type="Pfam" id="PF00568">
    <property type="entry name" value="WH1"/>
    <property type="match status" value="1"/>
</dbReference>
<dbReference type="SMART" id="SM00461">
    <property type="entry name" value="WH1"/>
    <property type="match status" value="1"/>
</dbReference>
<dbReference type="SUPFAM" id="SSF50729">
    <property type="entry name" value="PH domain-like"/>
    <property type="match status" value="1"/>
</dbReference>
<dbReference type="SUPFAM" id="SSF118370">
    <property type="entry name" value="Vasodilator-stimulated phosphoprotein, VASP, tetramerisation domain"/>
    <property type="match status" value="1"/>
</dbReference>
<dbReference type="PROSITE" id="PS50229">
    <property type="entry name" value="WH1"/>
    <property type="match status" value="1"/>
</dbReference>
<protein>
    <recommendedName>
        <fullName>Ena/VASP-like protein</fullName>
    </recommendedName>
    <alternativeName>
        <fullName>Ena/vasodilator-stimulated phosphoprotein-like</fullName>
    </alternativeName>
</protein>
<sequence length="692" mass="73921">MSEQSICQARASVMIYDDTSKKWVPIKPGQQGFSRINIYHNTANNTFRVVGVKLQDQQVVINYSLVKGLKYNQATPTFHQWRDARQVYGLNFASKEEATTFSNAMLFALNIMNSQDGGPAAQRQAQNIQNGPSPDDMEIQRRQMLEQQQRQETLERRTSTTVSTLQINVSSSPSHCQSPPPDYSNFSASPSTGAVPPPSYAKVISSAAASPELSSKSTNKSSNRTSEPPELQNSHCGSEPSTSQSSAFSPIRPSNGTVSRSIKQISLSPPPAPGSHSPLSLHQSVRHPSLSFSPCSSSPPVSVTSSVQKNISPQSPIPVVLPVIPVQNSRIRGCSDKMVQNPIVPQTGPSDQAEEPLTSQISLSSPRTQVKCVDRSFLSYIETVPVAQLPMITSPFGILTQASPQPFQSSTHPSQQSYQSMSHFVSLPPPYAAVSELTLPKRTTPYMTSSTITQFSPVLPPGHPSSAAMVASVGSAPAPASGPPPPPPPGPPPPSGGTPPPAPPLPAGGSQGVVYEESPASGLAAALAGAKLRKVQRPEDGSSSPCGATKTDANRTSSGGGGGGLMEEMNKLLAKRRKAASYTDKPGDKKEEECQNEDASLSSSPVTRGPTPQNSSDLGKKPWERSNSVEKPVPSLLSRMKPVSSSNDVSTDALDFDRMKQEILEEVVRELHKVKEEIIDAIRQELSRISTT</sequence>
<gene>
    <name evidence="2" type="primary">evl</name>
</gene>
<keyword id="KW-0009">Actin-binding</keyword>
<keyword id="KW-0025">Alternative splicing</keyword>
<keyword id="KW-0966">Cell projection</keyword>
<keyword id="KW-0963">Cytoplasm</keyword>
<keyword id="KW-0206">Cytoskeleton</keyword>
<keyword id="KW-1185">Reference proteome</keyword>
<keyword id="KW-0729">SH3-binding</keyword>
<reference evidence="8 9" key="1">
    <citation type="journal article" date="2005" name="Gene Expr. Patterns">
        <title>Molecular cloning and expression of Ena/Vasp-like (Evl) during Xenopus development.</title>
        <authorList>
            <person name="Wanner S.J."/>
            <person name="Danos M.C."/>
            <person name="Lohr J.L."/>
            <person name="Miller J.R."/>
        </authorList>
    </citation>
    <scope>NUCLEOTIDE SEQUENCE [MRNA] (ISOFORMS 1; 2 AND 3)</scope>
    <scope>TISSUE SPECIFICITY</scope>
    <scope>DEVELOPMENTAL STAGE</scope>
    <source>
        <tissue evidence="6">Embryo</tissue>
    </source>
</reference>
<evidence type="ECO:0000250" key="1"/>
<evidence type="ECO:0000250" key="2">
    <source>
        <dbReference type="UniProtKB" id="P70429"/>
    </source>
</evidence>
<evidence type="ECO:0000255" key="3"/>
<evidence type="ECO:0000255" key="4">
    <source>
        <dbReference type="PROSITE-ProRule" id="PRU00410"/>
    </source>
</evidence>
<evidence type="ECO:0000256" key="5">
    <source>
        <dbReference type="SAM" id="MobiDB-lite"/>
    </source>
</evidence>
<evidence type="ECO:0000269" key="6">
    <source>
    </source>
</evidence>
<evidence type="ECO:0000303" key="7">
    <source>
    </source>
</evidence>
<evidence type="ECO:0000305" key="8"/>
<evidence type="ECO:0000312" key="9">
    <source>
        <dbReference type="EMBL" id="AAU20373.1"/>
    </source>
</evidence>
<comment type="function">
    <text evidence="1">Ena/VASP proteins are actin-associated proteins involved in a range of processes dependent on cytoskeleton remodeling and cell polarity such as axon guidance and lamellipodial and filopodial dynamics in migrating cells. Evl enhances actin nucleation and polymerization (By similarity).</text>
</comment>
<comment type="subcellular location">
    <subcellularLocation>
        <location evidence="2">Cytoplasm</location>
        <location evidence="2">Cytoskeleton</location>
    </subcellularLocation>
    <subcellularLocation>
        <location evidence="2">Cytoplasm</location>
        <location evidence="2">Cytoskeleton</location>
        <location evidence="2">Stress fiber</location>
    </subcellularLocation>
    <subcellularLocation>
        <location evidence="2">Cell projection</location>
        <location evidence="2">Lamellipodium</location>
    </subcellularLocation>
</comment>
<comment type="alternative products">
    <event type="alternative splicing"/>
    <isoform>
        <id>Q64GL0-1</id>
        <name evidence="6">3</name>
        <name evidence="6">H</name>
        <sequence type="displayed"/>
    </isoform>
    <isoform>
        <id>Q64GL0-3</id>
        <name evidence="6">1</name>
        <sequence type="described" ref="VSP_052379 VSP_052380"/>
    </isoform>
    <isoform>
        <id>Q64GL0-2</id>
        <name evidence="6">2</name>
        <name evidence="6">I</name>
        <sequence type="described" ref="VSP_052379 VSP_052380 VSP_052381"/>
    </isoform>
</comment>
<comment type="tissue specificity">
    <text evidence="6">During embryonic and tadpole development, expressed in the cement gland, brain, neural tube, myotome and neural placodes, including the otic, lateral line and olfactory placodes. All isoforms show similar spatial expression patterns.</text>
</comment>
<comment type="developmental stage">
    <text evidence="6">First expressed at stage 18. Expression increases through the early tailbud stage (stage 23) and remains relatively high throughout the remainder of development. All isoforms show similar temporal expression patterns.</text>
</comment>
<comment type="domain">
    <text evidence="8">The EVH2 domain is comprised of 3 regions. Block A is a thymosin-like domain required for G-actin binding. The KLKR motif within this block is essential for the G-actin binding and for actin polymerization. Block B is required for F-actin binding and subcellular location, and Block C for tetramerization.</text>
</comment>
<comment type="similarity">
    <text evidence="3">Belongs to the Ena/VASP family.</text>
</comment>
<name>EVL_XENLA</name>